<evidence type="ECO:0000250" key="1">
    <source>
        <dbReference type="UniProtKB" id="Q9HHB6"/>
    </source>
</evidence>
<evidence type="ECO:0000269" key="2">
    <source>
    </source>
</evidence>
<evidence type="ECO:0000303" key="3">
    <source>
    </source>
</evidence>
<evidence type="ECO:0000305" key="4"/>
<evidence type="ECO:0000305" key="5">
    <source>
    </source>
</evidence>
<evidence type="ECO:0000312" key="6">
    <source>
        <dbReference type="EMBL" id="CAL35534.1"/>
    </source>
</evidence>
<evidence type="ECO:0000312" key="7">
    <source>
        <dbReference type="PDB" id="4N3O"/>
    </source>
</evidence>
<evidence type="ECO:0000312" key="8">
    <source>
        <dbReference type="Proteomes" id="UP000000799"/>
    </source>
</evidence>
<evidence type="ECO:0007744" key="9">
    <source>
        <dbReference type="PDB" id="4N3O"/>
    </source>
</evidence>
<evidence type="ECO:0007829" key="10">
    <source>
        <dbReference type="PDB" id="4N3O"/>
    </source>
</evidence>
<gene>
    <name evidence="6" type="primary">hddA</name>
    <name evidence="6" type="ordered locus">Cj1425c</name>
</gene>
<keyword id="KW-0002">3D-structure</keyword>
<keyword id="KW-0067">ATP-binding</keyword>
<keyword id="KW-0972">Capsule biogenesis/degradation</keyword>
<keyword id="KW-0119">Carbohydrate metabolism</keyword>
<keyword id="KW-0418">Kinase</keyword>
<keyword id="KW-0460">Magnesium</keyword>
<keyword id="KW-0479">Metal-binding</keyword>
<keyword id="KW-0547">Nucleotide-binding</keyword>
<keyword id="KW-1185">Reference proteome</keyword>
<keyword id="KW-0808">Transferase</keyword>
<protein>
    <recommendedName>
        <fullName evidence="3">D-glycero-alpha-D-manno-heptose 7-phosphate kinase</fullName>
        <ecNumber evidence="2">2.7.1.168</ecNumber>
    </recommendedName>
    <alternativeName>
        <fullName evidence="4">D-alpha-D-heptose 7-phosphate kinase</fullName>
    </alternativeName>
</protein>
<name>HDDA_CAMJE</name>
<sequence>MKTIRTQTPLRLGLAGGGTDINLYCDKYTGYVLNATISLYIHCTLIKREDGKIIFDSPDTNSYCEYESKEFLGNDGKLDIFKSIYNRIVKDFTKKPLSFSLHTYSDVPSGSGLGGSSTLVVGVIKAFAEWLNLPLGEYEIAKLAYEIEREDLGIVGGAQDQYAATFGGFNFMEFYNNKRVIVNPLRIKNWIASELEARTVLYFTNITREAKDIEEHKKGKLGDEKSLEAMHAIKQDAIKMKEALFRADFGTLAQILGKSWRSKKIISEIVSNDELERIYKLAIDNGAYSGKTSGAGAGGFMFFFVDPTKKYNLIKALRKEQGYVQDFSFTKEGVKSWRI</sequence>
<accession>Q0P8I9</accession>
<reference evidence="6 8" key="1">
    <citation type="journal article" date="2000" name="Nature">
        <title>The genome sequence of the food-borne pathogen Campylobacter jejuni reveals hypervariable sequences.</title>
        <authorList>
            <person name="Parkhill J."/>
            <person name="Wren B.W."/>
            <person name="Mungall K.L."/>
            <person name="Ketley J.M."/>
            <person name="Churcher C.M."/>
            <person name="Basham D."/>
            <person name="Chillingworth T."/>
            <person name="Davies R.M."/>
            <person name="Feltwell T."/>
            <person name="Holroyd S."/>
            <person name="Jagels K."/>
            <person name="Karlyshev A.V."/>
            <person name="Moule S."/>
            <person name="Pallen M.J."/>
            <person name="Penn C.W."/>
            <person name="Quail M.A."/>
            <person name="Rajandream M.A."/>
            <person name="Rutherford K.M."/>
            <person name="van Vliet A.H.M."/>
            <person name="Whitehead S."/>
            <person name="Barrell B.G."/>
        </authorList>
    </citation>
    <scope>NUCLEOTIDE SEQUENCE [LARGE SCALE GENOMIC DNA]</scope>
    <source>
        <strain evidence="8">ATCC 700819 / NCTC 11168</strain>
    </source>
</reference>
<reference key="2">
    <citation type="journal article" date="2019" name="Biochemistry">
        <title>Biosynthesis of GDP-d-glycero-alpha-d-manno-heptose for the Capsular Polysaccharide of Campylobacter jejuni.</title>
        <authorList>
            <person name="Huddleston J.P."/>
            <person name="Raushel F.M."/>
        </authorList>
    </citation>
    <scope>FUNCTION</scope>
    <scope>CATALYTIC ACTIVITY</scope>
    <scope>BIOPHYSICOCHEMICAL PROPERTIES</scope>
    <scope>PATHWAY</scope>
    <source>
        <strain evidence="3">ATCC 700819 / NCTC 11168</strain>
    </source>
</reference>
<reference evidence="9" key="3">
    <citation type="submission" date="2013-10" db="PDB data bank">
        <title>2.4 Angstrom Resolution Crystal Structure of Putative Sugar Kinase from Campylobacter jejuni.</title>
        <authorList>
            <consortium name="Center for Structural Genomics of Infectious Diseases (CSGID)"/>
            <person name="Minasov G."/>
            <person name="Wawrzak Z."/>
            <person name="Gordon E."/>
            <person name="Onopriyenko O."/>
            <person name="Grimshaw S."/>
            <person name="Kwon K."/>
            <person name="Savchenko A."/>
            <person name="Anderson W.F."/>
        </authorList>
    </citation>
    <scope>X-RAY CRYSTALLOGRAPHY (2.40 ANGSTROMS) IN COMPLEX WITH CALCIUM</scope>
    <source>
        <strain evidence="7">ATCC 700819 / NCTC 11168</strain>
    </source>
</reference>
<dbReference type="EC" id="2.7.1.168" evidence="2"/>
<dbReference type="EMBL" id="AL111168">
    <property type="protein sequence ID" value="CAL35534.1"/>
    <property type="molecule type" value="Genomic_DNA"/>
</dbReference>
<dbReference type="PIR" id="A81288">
    <property type="entry name" value="A81288"/>
</dbReference>
<dbReference type="RefSeq" id="WP_002858413.1">
    <property type="nucleotide sequence ID" value="NZ_SZUC01000003.1"/>
</dbReference>
<dbReference type="RefSeq" id="YP_002344808.1">
    <property type="nucleotide sequence ID" value="NC_002163.1"/>
</dbReference>
<dbReference type="PDB" id="4N3O">
    <property type="method" value="X-ray"/>
    <property type="resolution" value="2.40 A"/>
    <property type="chains" value="A/B=1-339"/>
</dbReference>
<dbReference type="PDBsum" id="4N3O"/>
<dbReference type="SMR" id="Q0P8I9"/>
<dbReference type="STRING" id="192222.Cj1425c"/>
<dbReference type="PaxDb" id="192222-Cj1425c"/>
<dbReference type="EnsemblBacteria" id="CAL35534">
    <property type="protein sequence ID" value="CAL35534"/>
    <property type="gene ID" value="Cj1425c"/>
</dbReference>
<dbReference type="GeneID" id="905714"/>
<dbReference type="KEGG" id="cje:Cj1425c"/>
<dbReference type="PATRIC" id="fig|192222.6.peg.1406"/>
<dbReference type="eggNOG" id="COG2605">
    <property type="taxonomic scope" value="Bacteria"/>
</dbReference>
<dbReference type="HOGENOM" id="CLU_048558_1_0_7"/>
<dbReference type="OrthoDB" id="9812992at2"/>
<dbReference type="STRENDA-DB" id="BJ9TZW">
    <property type="experiment" value="Characterization of Cj1425"/>
</dbReference>
<dbReference type="UniPathway" id="UPA00543">
    <property type="reaction ID" value="UER00606"/>
</dbReference>
<dbReference type="UniPathway" id="UPA00934"/>
<dbReference type="EvolutionaryTrace" id="Q0P8I9"/>
<dbReference type="Proteomes" id="UP000000799">
    <property type="component" value="Chromosome"/>
</dbReference>
<dbReference type="GO" id="GO:0005829">
    <property type="term" value="C:cytosol"/>
    <property type="evidence" value="ECO:0007669"/>
    <property type="project" value="TreeGrafter"/>
</dbReference>
<dbReference type="GO" id="GO:0005524">
    <property type="term" value="F:ATP binding"/>
    <property type="evidence" value="ECO:0000250"/>
    <property type="project" value="UniProtKB"/>
</dbReference>
<dbReference type="GO" id="GO:0004335">
    <property type="term" value="F:galactokinase activity"/>
    <property type="evidence" value="ECO:0007669"/>
    <property type="project" value="TreeGrafter"/>
</dbReference>
<dbReference type="GO" id="GO:0016301">
    <property type="term" value="F:kinase activity"/>
    <property type="evidence" value="ECO:0000314"/>
    <property type="project" value="UniProtKB"/>
</dbReference>
<dbReference type="GO" id="GO:0000287">
    <property type="term" value="F:magnesium ion binding"/>
    <property type="evidence" value="ECO:0000250"/>
    <property type="project" value="UniProtKB"/>
</dbReference>
<dbReference type="GO" id="GO:0045227">
    <property type="term" value="P:capsule polysaccharide biosynthetic process"/>
    <property type="evidence" value="ECO:0000305"/>
    <property type="project" value="UniProtKB"/>
</dbReference>
<dbReference type="GO" id="GO:2001060">
    <property type="term" value="P:D-glycero-D-manno-heptose 7-phosphate metabolic process"/>
    <property type="evidence" value="ECO:0000314"/>
    <property type="project" value="UniProtKB"/>
</dbReference>
<dbReference type="GO" id="GO:0006012">
    <property type="term" value="P:galactose metabolic process"/>
    <property type="evidence" value="ECO:0007669"/>
    <property type="project" value="TreeGrafter"/>
</dbReference>
<dbReference type="GO" id="GO:0009226">
    <property type="term" value="P:nucleotide-sugar biosynthetic process"/>
    <property type="evidence" value="ECO:0000314"/>
    <property type="project" value="UniProtKB"/>
</dbReference>
<dbReference type="Gene3D" id="3.30.230.120">
    <property type="match status" value="1"/>
</dbReference>
<dbReference type="InterPro" id="IPR013750">
    <property type="entry name" value="GHMP_kinase_C_dom"/>
</dbReference>
<dbReference type="InterPro" id="IPR036554">
    <property type="entry name" value="GHMP_kinase_C_sf"/>
</dbReference>
<dbReference type="InterPro" id="IPR006204">
    <property type="entry name" value="GHMP_kinase_N_dom"/>
</dbReference>
<dbReference type="InterPro" id="IPR001174">
    <property type="entry name" value="HddA/FKP"/>
</dbReference>
<dbReference type="InterPro" id="IPR014606">
    <property type="entry name" value="Heptose_7-P_kinase"/>
</dbReference>
<dbReference type="InterPro" id="IPR020568">
    <property type="entry name" value="Ribosomal_Su5_D2-typ_SF"/>
</dbReference>
<dbReference type="PANTHER" id="PTHR10457:SF9">
    <property type="entry name" value="D-GLYCERO-ALPHA-D-MANNO-HEPTOSE 7-PHOSPHATE KINASE"/>
    <property type="match status" value="1"/>
</dbReference>
<dbReference type="PANTHER" id="PTHR10457">
    <property type="entry name" value="MEVALONATE KINASE/GALACTOKINASE"/>
    <property type="match status" value="1"/>
</dbReference>
<dbReference type="Pfam" id="PF08544">
    <property type="entry name" value="GHMP_kinases_C"/>
    <property type="match status" value="1"/>
</dbReference>
<dbReference type="Pfam" id="PF00288">
    <property type="entry name" value="GHMP_kinases_N"/>
    <property type="match status" value="1"/>
</dbReference>
<dbReference type="PIRSF" id="PIRSF036406">
    <property type="entry name" value="Hept_kin"/>
    <property type="match status" value="1"/>
</dbReference>
<dbReference type="PRINTS" id="PR00960">
    <property type="entry name" value="LMBPPROTEIN"/>
</dbReference>
<dbReference type="SUPFAM" id="SSF55060">
    <property type="entry name" value="GHMP Kinase, C-terminal domain"/>
    <property type="match status" value="1"/>
</dbReference>
<dbReference type="SUPFAM" id="SSF54211">
    <property type="entry name" value="Ribosomal protein S5 domain 2-like"/>
    <property type="match status" value="1"/>
</dbReference>
<comment type="function">
    <text evidence="2">Catalyzes the phosphorylation of D-glycero-alpha-D-manno-heptose 7-phosphate at the C-1 position to form D-glycero-alpha-D-manno-heptose 1,7-bisphosphate.</text>
</comment>
<comment type="catalytic activity">
    <reaction evidence="2">
        <text>D-glycero-alpha-D-manno-heptose 7-phosphate + ATP = D-glycero-alpha-D-manno-heptose 1,7-bisphosphate + ADP + H(+)</text>
        <dbReference type="Rhea" id="RHEA:27570"/>
        <dbReference type="ChEBI" id="CHEBI:15378"/>
        <dbReference type="ChEBI" id="CHEBI:30616"/>
        <dbReference type="ChEBI" id="CHEBI:60203"/>
        <dbReference type="ChEBI" id="CHEBI:60207"/>
        <dbReference type="ChEBI" id="CHEBI:456216"/>
        <dbReference type="EC" id="2.7.1.168"/>
    </reaction>
</comment>
<comment type="biophysicochemical properties">
    <kinetics>
        <KM evidence="2">103 uM for D-glycero-D-manno-heptose 7-phosphate (at pH 7.4 and 30 degrees Celsius)</KM>
        <text evidence="2">kcat is 0.48 sec(-1) for D-glycero-D-manno-heptose 7-phosphate.</text>
    </kinetics>
</comment>
<comment type="pathway">
    <text evidence="2">Nucleotide-sugar biosynthesis; GDP-D-glycero-alpha-D-manno-heptose biosynthesis; GDP-D-glycero-alpha-D-manno-heptose from D-glycero-alpha-D-manno-heptose 7-phosphate: step 1/3.</text>
</comment>
<comment type="pathway">
    <text evidence="5">Capsule biogenesis; capsule polysaccharide biosynthesis.</text>
</comment>
<comment type="similarity">
    <text evidence="4">Belongs to the GHMP kinase family.</text>
</comment>
<feature type="chain" id="PRO_0000454934" description="D-glycero-alpha-D-manno-heptose 7-phosphate kinase">
    <location>
        <begin position="1"/>
        <end position="339"/>
    </location>
</feature>
<feature type="active site" description="Proton acceptor" evidence="1">
    <location>
        <position position="160"/>
    </location>
</feature>
<feature type="binding site" evidence="1">
    <location>
        <begin position="17"/>
        <end position="20"/>
    </location>
    <ligand>
        <name>substrate</name>
    </ligand>
</feature>
<feature type="binding site" evidence="1">
    <location>
        <position position="57"/>
    </location>
    <ligand>
        <name>ATP</name>
        <dbReference type="ChEBI" id="CHEBI:30616"/>
    </ligand>
</feature>
<feature type="binding site" evidence="1">
    <location>
        <begin position="110"/>
        <end position="116"/>
    </location>
    <ligand>
        <name>ATP</name>
        <dbReference type="ChEBI" id="CHEBI:30616"/>
    </ligand>
</feature>
<feature type="binding site" evidence="1">
    <location>
        <position position="116"/>
    </location>
    <ligand>
        <name>Mg(2+)</name>
        <dbReference type="ChEBI" id="CHEBI:18420"/>
    </ligand>
</feature>
<feature type="binding site" evidence="1">
    <location>
        <position position="148"/>
    </location>
    <ligand>
        <name>Mg(2+)</name>
        <dbReference type="ChEBI" id="CHEBI:18420"/>
    </ligand>
</feature>
<feature type="site" description="Transition state stabilizer" evidence="1">
    <location>
        <position position="11"/>
    </location>
</feature>
<feature type="strand" evidence="10">
    <location>
        <begin position="3"/>
        <end position="18"/>
    </location>
</feature>
<feature type="strand" evidence="10">
    <location>
        <begin position="24"/>
        <end position="26"/>
    </location>
</feature>
<feature type="strand" evidence="10">
    <location>
        <begin position="28"/>
        <end position="47"/>
    </location>
</feature>
<feature type="strand" evidence="10">
    <location>
        <begin position="49"/>
        <end position="57"/>
    </location>
</feature>
<feature type="helix" evidence="10">
    <location>
        <begin position="58"/>
        <end position="60"/>
    </location>
</feature>
<feature type="strand" evidence="10">
    <location>
        <begin position="62"/>
        <end position="67"/>
    </location>
</feature>
<feature type="strand" evidence="10">
    <location>
        <begin position="76"/>
        <end position="78"/>
    </location>
</feature>
<feature type="helix" evidence="10">
    <location>
        <begin position="79"/>
        <end position="91"/>
    </location>
</feature>
<feature type="strand" evidence="10">
    <location>
        <begin position="99"/>
        <end position="107"/>
    </location>
</feature>
<feature type="strand" evidence="10">
    <location>
        <begin position="112"/>
        <end position="114"/>
    </location>
</feature>
<feature type="helix" evidence="10">
    <location>
        <begin position="115"/>
        <end position="131"/>
    </location>
</feature>
<feature type="helix" evidence="10">
    <location>
        <begin position="137"/>
        <end position="150"/>
    </location>
</feature>
<feature type="helix" evidence="10">
    <location>
        <begin position="159"/>
        <end position="166"/>
    </location>
</feature>
<feature type="strand" evidence="10">
    <location>
        <begin position="168"/>
        <end position="175"/>
    </location>
</feature>
<feature type="turn" evidence="10">
    <location>
        <begin position="176"/>
        <end position="178"/>
    </location>
</feature>
<feature type="strand" evidence="10">
    <location>
        <begin position="179"/>
        <end position="185"/>
    </location>
</feature>
<feature type="helix" evidence="10">
    <location>
        <begin position="189"/>
        <end position="197"/>
    </location>
</feature>
<feature type="strand" evidence="10">
    <location>
        <begin position="199"/>
        <end position="203"/>
    </location>
</feature>
<feature type="helix" evidence="10">
    <location>
        <begin position="229"/>
        <end position="232"/>
    </location>
</feature>
<feature type="helix" evidence="10">
    <location>
        <begin position="233"/>
        <end position="245"/>
    </location>
</feature>
<feature type="helix" evidence="10">
    <location>
        <begin position="249"/>
        <end position="259"/>
    </location>
</feature>
<feature type="strand" evidence="10">
    <location>
        <begin position="261"/>
        <end position="263"/>
    </location>
</feature>
<feature type="helix" evidence="10">
    <location>
        <begin position="264"/>
        <end position="270"/>
    </location>
</feature>
<feature type="helix" evidence="10">
    <location>
        <begin position="273"/>
        <end position="284"/>
    </location>
</feature>
<feature type="strand" evidence="10">
    <location>
        <begin position="287"/>
        <end position="294"/>
    </location>
</feature>
<feature type="strand" evidence="10">
    <location>
        <begin position="300"/>
        <end position="305"/>
    </location>
</feature>
<feature type="helix" evidence="10">
    <location>
        <begin position="307"/>
        <end position="309"/>
    </location>
</feature>
<feature type="helix" evidence="10">
    <location>
        <begin position="310"/>
        <end position="317"/>
    </location>
</feature>
<feature type="strand" evidence="10">
    <location>
        <begin position="320"/>
        <end position="324"/>
    </location>
</feature>
<feature type="strand" evidence="10">
    <location>
        <begin position="335"/>
        <end position="338"/>
    </location>
</feature>
<organism evidence="6">
    <name type="scientific">Campylobacter jejuni subsp. jejuni serotype O:2 (strain ATCC 700819 / NCTC 11168)</name>
    <dbReference type="NCBI Taxonomy" id="192222"/>
    <lineage>
        <taxon>Bacteria</taxon>
        <taxon>Pseudomonadati</taxon>
        <taxon>Campylobacterota</taxon>
        <taxon>Epsilonproteobacteria</taxon>
        <taxon>Campylobacterales</taxon>
        <taxon>Campylobacteraceae</taxon>
        <taxon>Campylobacter</taxon>
    </lineage>
</organism>
<proteinExistence type="evidence at protein level"/>